<organism>
    <name type="scientific">Caulobacter vibrioides (strain ATCC 19089 / CIP 103742 / CB 15)</name>
    <name type="common">Caulobacter crescentus</name>
    <dbReference type="NCBI Taxonomy" id="190650"/>
    <lineage>
        <taxon>Bacteria</taxon>
        <taxon>Pseudomonadati</taxon>
        <taxon>Pseudomonadota</taxon>
        <taxon>Alphaproteobacteria</taxon>
        <taxon>Caulobacterales</taxon>
        <taxon>Caulobacteraceae</taxon>
        <taxon>Caulobacter</taxon>
    </lineage>
</organism>
<evidence type="ECO:0000255" key="1">
    <source>
        <dbReference type="HAMAP-Rule" id="MF_00175"/>
    </source>
</evidence>
<evidence type="ECO:0000255" key="2">
    <source>
        <dbReference type="PROSITE-ProRule" id="PRU01250"/>
    </source>
</evidence>
<dbReference type="EMBL" id="AE005673">
    <property type="protein sequence ID" value="AAK23936.1"/>
    <property type="molecule type" value="Genomic_DNA"/>
</dbReference>
<dbReference type="PIR" id="D87492">
    <property type="entry name" value="D87492"/>
</dbReference>
<dbReference type="RefSeq" id="NP_420768.1">
    <property type="nucleotide sequence ID" value="NC_002696.2"/>
</dbReference>
<dbReference type="RefSeq" id="WP_010919827.1">
    <property type="nucleotide sequence ID" value="NC_002696.2"/>
</dbReference>
<dbReference type="SMR" id="P0CAU2"/>
<dbReference type="DIP" id="DIP-61220N"/>
<dbReference type="IntAct" id="P0CAU2">
    <property type="interactions" value="3"/>
</dbReference>
<dbReference type="STRING" id="190650.CC_1961"/>
<dbReference type="EnsemblBacteria" id="AAK23936">
    <property type="protein sequence ID" value="AAK23936"/>
    <property type="gene ID" value="CC_1961"/>
</dbReference>
<dbReference type="KEGG" id="ccr:CC_1961"/>
<dbReference type="PATRIC" id="fig|190650.5.peg.1977"/>
<dbReference type="eggNOG" id="COG1219">
    <property type="taxonomic scope" value="Bacteria"/>
</dbReference>
<dbReference type="HOGENOM" id="CLU_014218_8_2_5"/>
<dbReference type="BioCyc" id="CAULO:CC1961-MONOMER"/>
<dbReference type="Proteomes" id="UP000001816">
    <property type="component" value="Chromosome"/>
</dbReference>
<dbReference type="GO" id="GO:0009376">
    <property type="term" value="C:HslUV protease complex"/>
    <property type="evidence" value="ECO:0007669"/>
    <property type="project" value="TreeGrafter"/>
</dbReference>
<dbReference type="GO" id="GO:0005524">
    <property type="term" value="F:ATP binding"/>
    <property type="evidence" value="ECO:0007669"/>
    <property type="project" value="UniProtKB-UniRule"/>
</dbReference>
<dbReference type="GO" id="GO:0016887">
    <property type="term" value="F:ATP hydrolysis activity"/>
    <property type="evidence" value="ECO:0007669"/>
    <property type="project" value="InterPro"/>
</dbReference>
<dbReference type="GO" id="GO:0140662">
    <property type="term" value="F:ATP-dependent protein folding chaperone"/>
    <property type="evidence" value="ECO:0007669"/>
    <property type="project" value="InterPro"/>
</dbReference>
<dbReference type="GO" id="GO:0046983">
    <property type="term" value="F:protein dimerization activity"/>
    <property type="evidence" value="ECO:0007669"/>
    <property type="project" value="InterPro"/>
</dbReference>
<dbReference type="GO" id="GO:0051082">
    <property type="term" value="F:unfolded protein binding"/>
    <property type="evidence" value="ECO:0007669"/>
    <property type="project" value="UniProtKB-UniRule"/>
</dbReference>
<dbReference type="GO" id="GO:0008270">
    <property type="term" value="F:zinc ion binding"/>
    <property type="evidence" value="ECO:0007669"/>
    <property type="project" value="InterPro"/>
</dbReference>
<dbReference type="GO" id="GO:0051301">
    <property type="term" value="P:cell division"/>
    <property type="evidence" value="ECO:0007669"/>
    <property type="project" value="TreeGrafter"/>
</dbReference>
<dbReference type="GO" id="GO:0051603">
    <property type="term" value="P:proteolysis involved in protein catabolic process"/>
    <property type="evidence" value="ECO:0007669"/>
    <property type="project" value="TreeGrafter"/>
</dbReference>
<dbReference type="CDD" id="cd19497">
    <property type="entry name" value="RecA-like_ClpX"/>
    <property type="match status" value="1"/>
</dbReference>
<dbReference type="FunFam" id="1.10.8.60:FF:000002">
    <property type="entry name" value="ATP-dependent Clp protease ATP-binding subunit ClpX"/>
    <property type="match status" value="1"/>
</dbReference>
<dbReference type="FunFam" id="3.40.50.300:FF:000005">
    <property type="entry name" value="ATP-dependent Clp protease ATP-binding subunit ClpX"/>
    <property type="match status" value="1"/>
</dbReference>
<dbReference type="Gene3D" id="1.10.8.60">
    <property type="match status" value="1"/>
</dbReference>
<dbReference type="Gene3D" id="6.20.220.10">
    <property type="entry name" value="ClpX chaperone, C4-type zinc finger domain"/>
    <property type="match status" value="1"/>
</dbReference>
<dbReference type="Gene3D" id="3.40.50.300">
    <property type="entry name" value="P-loop containing nucleotide triphosphate hydrolases"/>
    <property type="match status" value="1"/>
</dbReference>
<dbReference type="HAMAP" id="MF_00175">
    <property type="entry name" value="ClpX"/>
    <property type="match status" value="1"/>
</dbReference>
<dbReference type="InterPro" id="IPR003593">
    <property type="entry name" value="AAA+_ATPase"/>
</dbReference>
<dbReference type="InterPro" id="IPR050052">
    <property type="entry name" value="ATP-dep_Clp_protease_ClpX"/>
</dbReference>
<dbReference type="InterPro" id="IPR003959">
    <property type="entry name" value="ATPase_AAA_core"/>
</dbReference>
<dbReference type="InterPro" id="IPR019489">
    <property type="entry name" value="Clp_ATPase_C"/>
</dbReference>
<dbReference type="InterPro" id="IPR004487">
    <property type="entry name" value="Clp_protease_ATP-bd_su_ClpX"/>
</dbReference>
<dbReference type="InterPro" id="IPR046425">
    <property type="entry name" value="ClpX_bact"/>
</dbReference>
<dbReference type="InterPro" id="IPR027417">
    <property type="entry name" value="P-loop_NTPase"/>
</dbReference>
<dbReference type="InterPro" id="IPR010603">
    <property type="entry name" value="Znf_CppX_C4"/>
</dbReference>
<dbReference type="InterPro" id="IPR038366">
    <property type="entry name" value="Znf_CppX_C4_sf"/>
</dbReference>
<dbReference type="NCBIfam" id="TIGR00382">
    <property type="entry name" value="clpX"/>
    <property type="match status" value="1"/>
</dbReference>
<dbReference type="NCBIfam" id="NF003745">
    <property type="entry name" value="PRK05342.1"/>
    <property type="match status" value="1"/>
</dbReference>
<dbReference type="PANTHER" id="PTHR48102:SF7">
    <property type="entry name" value="ATP-DEPENDENT CLP PROTEASE ATP-BINDING SUBUNIT CLPX-LIKE, MITOCHONDRIAL"/>
    <property type="match status" value="1"/>
</dbReference>
<dbReference type="PANTHER" id="PTHR48102">
    <property type="entry name" value="ATP-DEPENDENT CLP PROTEASE ATP-BINDING SUBUNIT CLPX-LIKE, MITOCHONDRIAL-RELATED"/>
    <property type="match status" value="1"/>
</dbReference>
<dbReference type="Pfam" id="PF07724">
    <property type="entry name" value="AAA_2"/>
    <property type="match status" value="1"/>
</dbReference>
<dbReference type="Pfam" id="PF10431">
    <property type="entry name" value="ClpB_D2-small"/>
    <property type="match status" value="1"/>
</dbReference>
<dbReference type="Pfam" id="PF06689">
    <property type="entry name" value="zf-C4_ClpX"/>
    <property type="match status" value="1"/>
</dbReference>
<dbReference type="SMART" id="SM00382">
    <property type="entry name" value="AAA"/>
    <property type="match status" value="1"/>
</dbReference>
<dbReference type="SMART" id="SM01086">
    <property type="entry name" value="ClpB_D2-small"/>
    <property type="match status" value="1"/>
</dbReference>
<dbReference type="SMART" id="SM00994">
    <property type="entry name" value="zf-C4_ClpX"/>
    <property type="match status" value="1"/>
</dbReference>
<dbReference type="SUPFAM" id="SSF57716">
    <property type="entry name" value="Glucocorticoid receptor-like (DNA-binding domain)"/>
    <property type="match status" value="1"/>
</dbReference>
<dbReference type="SUPFAM" id="SSF52540">
    <property type="entry name" value="P-loop containing nucleoside triphosphate hydrolases"/>
    <property type="match status" value="1"/>
</dbReference>
<dbReference type="PROSITE" id="PS51902">
    <property type="entry name" value="CLPX_ZB"/>
    <property type="match status" value="1"/>
</dbReference>
<comment type="function">
    <text evidence="1">ATP-dependent specificity component of the Clp protease. It directs the protease to specific substrates. Can perform chaperone functions in the absence of ClpP.</text>
</comment>
<comment type="subunit">
    <text evidence="1">Component of the ClpX-ClpP complex. Forms a hexameric ring that, in the presence of ATP, binds to fourteen ClpP subunits assembled into a disk-like structure with a central cavity, resembling the structure of eukaryotic proteasomes.</text>
</comment>
<comment type="interaction">
    <interactant intactId="EBI-850762">
        <id>P0CAU2</id>
    </interactant>
    <interactant intactId="EBI-850784">
        <id>Q9A3A9</id>
        <label>rcdA</label>
    </interactant>
    <organismsDiffer>false</organismsDiffer>
    <experiments>2</experiments>
</comment>
<comment type="similarity">
    <text evidence="1">Belongs to the ClpX chaperone family.</text>
</comment>
<sequence length="420" mass="45860">MTKAASGDTKSTLYCSFCGKSQHEVRKLIAGPTVFICDECVELCMDIIREEHKIAFVKSKDGVPTPREICEVLDDYVIGQGHAKKVLAVAVHNHYKRLNHASKNNDVELAKSNILLVGPTGTGKTLLAQTLARIIDVPFTMADATTLTEAGYVGEDVENIVLKLLQAADYNVERAQRGIVYIDEIDKISRKSDNPSITRDVSGEGVQQALLKIMEGTVASVPPQGGRKHPQQEFLQVDTTNILFICGGAFAGLEKIISARGAAKSIGFGAKVTDPEERRTGEILRNVEPDDLQRFGLIPEFIGRLPVVATLEDLDEAALVKILTEPKNAFVKQYQRLFEMENIGLTFTEDALHQVAKKAIARKTGARGLRSIMEGILLETMFELPTYEGVEEVVVNAEVVEGRAQPLLIYAEKKGGAASA</sequence>
<keyword id="KW-0067">ATP-binding</keyword>
<keyword id="KW-0143">Chaperone</keyword>
<keyword id="KW-0479">Metal-binding</keyword>
<keyword id="KW-0547">Nucleotide-binding</keyword>
<keyword id="KW-1185">Reference proteome</keyword>
<keyword id="KW-0862">Zinc</keyword>
<accession>P0CAU2</accession>
<accession>O87708</accession>
<reference key="1">
    <citation type="journal article" date="2001" name="Proc. Natl. Acad. Sci. U.S.A.">
        <title>Complete genome sequence of Caulobacter crescentus.</title>
        <authorList>
            <person name="Nierman W.C."/>
            <person name="Feldblyum T.V."/>
            <person name="Laub M.T."/>
            <person name="Paulsen I.T."/>
            <person name="Nelson K.E."/>
            <person name="Eisen J.A."/>
            <person name="Heidelberg J.F."/>
            <person name="Alley M.R.K."/>
            <person name="Ohta N."/>
            <person name="Maddock J.R."/>
            <person name="Potocka I."/>
            <person name="Nelson W.C."/>
            <person name="Newton A."/>
            <person name="Stephens C."/>
            <person name="Phadke N.D."/>
            <person name="Ely B."/>
            <person name="DeBoy R.T."/>
            <person name="Dodson R.J."/>
            <person name="Durkin A.S."/>
            <person name="Gwinn M.L."/>
            <person name="Haft D.H."/>
            <person name="Kolonay J.F."/>
            <person name="Smit J."/>
            <person name="Craven M.B."/>
            <person name="Khouri H.M."/>
            <person name="Shetty J."/>
            <person name="Berry K.J."/>
            <person name="Utterback T.R."/>
            <person name="Tran K."/>
            <person name="Wolf A.M."/>
            <person name="Vamathevan J.J."/>
            <person name="Ermolaeva M.D."/>
            <person name="White O."/>
            <person name="Salzberg S.L."/>
            <person name="Venter J.C."/>
            <person name="Shapiro L."/>
            <person name="Fraser C.M."/>
        </authorList>
    </citation>
    <scope>NUCLEOTIDE SEQUENCE [LARGE SCALE GENOMIC DNA]</scope>
    <source>
        <strain>ATCC 19089 / CIP 103742 / CB 15</strain>
    </source>
</reference>
<gene>
    <name evidence="1" type="primary">clpX</name>
    <name type="ordered locus">CC_1961</name>
</gene>
<protein>
    <recommendedName>
        <fullName evidence="1">ATP-dependent Clp protease ATP-binding subunit ClpX</fullName>
    </recommendedName>
</protein>
<name>CLPX_CAUVC</name>
<feature type="chain" id="PRO_0000160335" description="ATP-dependent Clp protease ATP-binding subunit ClpX">
    <location>
        <begin position="1"/>
        <end position="420"/>
    </location>
</feature>
<feature type="domain" description="ClpX-type ZB" evidence="2">
    <location>
        <begin position="3"/>
        <end position="56"/>
    </location>
</feature>
<feature type="binding site" evidence="2">
    <location>
        <position position="15"/>
    </location>
    <ligand>
        <name>Zn(2+)</name>
        <dbReference type="ChEBI" id="CHEBI:29105"/>
    </ligand>
</feature>
<feature type="binding site" evidence="2">
    <location>
        <position position="18"/>
    </location>
    <ligand>
        <name>Zn(2+)</name>
        <dbReference type="ChEBI" id="CHEBI:29105"/>
    </ligand>
</feature>
<feature type="binding site" evidence="2">
    <location>
        <position position="37"/>
    </location>
    <ligand>
        <name>Zn(2+)</name>
        <dbReference type="ChEBI" id="CHEBI:29105"/>
    </ligand>
</feature>
<feature type="binding site" evidence="2">
    <location>
        <position position="40"/>
    </location>
    <ligand>
        <name>Zn(2+)</name>
        <dbReference type="ChEBI" id="CHEBI:29105"/>
    </ligand>
</feature>
<feature type="binding site" evidence="1">
    <location>
        <begin position="119"/>
        <end position="126"/>
    </location>
    <ligand>
        <name>ATP</name>
        <dbReference type="ChEBI" id="CHEBI:30616"/>
    </ligand>
</feature>
<proteinExistence type="evidence at protein level"/>